<dbReference type="EMBL" id="L77117">
    <property type="protein sequence ID" value="AAB99036.1"/>
    <property type="molecule type" value="Genomic_DNA"/>
</dbReference>
<dbReference type="PIR" id="G64428">
    <property type="entry name" value="G64428"/>
</dbReference>
<dbReference type="RefSeq" id="WP_010870545.1">
    <property type="nucleotide sequence ID" value="NC_000909.1"/>
</dbReference>
<dbReference type="SMR" id="Q58438"/>
<dbReference type="FunCoup" id="Q58438">
    <property type="interactions" value="3"/>
</dbReference>
<dbReference type="STRING" id="243232.MJ_1032"/>
<dbReference type="PaxDb" id="243232-MJ_1032"/>
<dbReference type="EnsemblBacteria" id="AAB99036">
    <property type="protein sequence ID" value="AAB99036"/>
    <property type="gene ID" value="MJ_1032"/>
</dbReference>
<dbReference type="GeneID" id="1451929"/>
<dbReference type="KEGG" id="mja:MJ_1032"/>
<dbReference type="eggNOG" id="arCOG04151">
    <property type="taxonomic scope" value="Archaea"/>
</dbReference>
<dbReference type="HOGENOM" id="CLU_048986_1_0_2"/>
<dbReference type="InParanoid" id="Q58438"/>
<dbReference type="OrthoDB" id="31282at2157"/>
<dbReference type="PhylomeDB" id="Q58438"/>
<dbReference type="Proteomes" id="UP000000805">
    <property type="component" value="Chromosome"/>
</dbReference>
<dbReference type="GO" id="GO:0005886">
    <property type="term" value="C:plasma membrane"/>
    <property type="evidence" value="ECO:0007669"/>
    <property type="project" value="UniProtKB-SubCell"/>
</dbReference>
<dbReference type="InterPro" id="IPR007254">
    <property type="entry name" value="DUF373"/>
</dbReference>
<dbReference type="PANTHER" id="PTHR38815:SF1">
    <property type="entry name" value="DUF373 FAMILY PROTEIN"/>
    <property type="match status" value="1"/>
</dbReference>
<dbReference type="PANTHER" id="PTHR38815">
    <property type="entry name" value="HYPOTHETICAL MEMBRANE PROTEIN, CONSERVED, DUF373 FAMILY"/>
    <property type="match status" value="1"/>
</dbReference>
<dbReference type="Pfam" id="PF04123">
    <property type="entry name" value="DUF373"/>
    <property type="match status" value="1"/>
</dbReference>
<protein>
    <recommendedName>
        <fullName>Uncharacterized protein MJ1032</fullName>
    </recommendedName>
</protein>
<sequence length="366" mass="41470">MEKEGVKNYLVLVVDIDDDIGRKAGLNTPILGREENIKALIKLGLADPGDSDVNAILGGVKIYDELKASGKDVEIATISGDVDVESEKCALRIKEQIDFLLYLYNPDFIYLVSDGKEDEMILKYLESKNIFVWKKRVIVKQSETLESTYYLIQEFIKKTMEEYIPLILTFIGFSLILYAIFADIGWRIVVGIIGLYILSEGVGVRKLLMEKIKKKEEFDVGRVFPISASISIFILIIGLIYSLSSINKTSSTLTEFIGEFLLHFVDSLTLSLLILMVGKFVDTIINSEKDLLEILKKYFFCLICIFISRELIISGGEYLLKKISFIMFVMCVIIYISIVIILSVILFTKSSKEDKFKKLKNSITKG</sequence>
<organism>
    <name type="scientific">Methanocaldococcus jannaschii (strain ATCC 43067 / DSM 2661 / JAL-1 / JCM 10045 / NBRC 100440)</name>
    <name type="common">Methanococcus jannaschii</name>
    <dbReference type="NCBI Taxonomy" id="243232"/>
    <lineage>
        <taxon>Archaea</taxon>
        <taxon>Methanobacteriati</taxon>
        <taxon>Methanobacteriota</taxon>
        <taxon>Methanomada group</taxon>
        <taxon>Methanococci</taxon>
        <taxon>Methanococcales</taxon>
        <taxon>Methanocaldococcaceae</taxon>
        <taxon>Methanocaldococcus</taxon>
    </lineage>
</organism>
<evidence type="ECO:0000255" key="1"/>
<evidence type="ECO:0000305" key="2"/>
<name>Y1032_METJA</name>
<feature type="chain" id="PRO_0000107149" description="Uncharacterized protein MJ1032">
    <location>
        <begin position="1"/>
        <end position="366"/>
    </location>
</feature>
<feature type="transmembrane region" description="Helical" evidence="1">
    <location>
        <begin position="164"/>
        <end position="184"/>
    </location>
</feature>
<feature type="transmembrane region" description="Helical" evidence="1">
    <location>
        <begin position="188"/>
        <end position="208"/>
    </location>
</feature>
<feature type="transmembrane region" description="Helical" evidence="1">
    <location>
        <begin position="223"/>
        <end position="243"/>
    </location>
</feature>
<feature type="transmembrane region" description="Helical" evidence="1">
    <location>
        <begin position="256"/>
        <end position="276"/>
    </location>
</feature>
<feature type="transmembrane region" description="Helical" evidence="1">
    <location>
        <begin position="299"/>
        <end position="319"/>
    </location>
</feature>
<feature type="transmembrane region" description="Helical" evidence="1">
    <location>
        <begin position="325"/>
        <end position="345"/>
    </location>
</feature>
<proteinExistence type="predicted"/>
<reference key="1">
    <citation type="journal article" date="1996" name="Science">
        <title>Complete genome sequence of the methanogenic archaeon, Methanococcus jannaschii.</title>
        <authorList>
            <person name="Bult C.J."/>
            <person name="White O."/>
            <person name="Olsen G.J."/>
            <person name="Zhou L."/>
            <person name="Fleischmann R.D."/>
            <person name="Sutton G.G."/>
            <person name="Blake J.A."/>
            <person name="FitzGerald L.M."/>
            <person name="Clayton R.A."/>
            <person name="Gocayne J.D."/>
            <person name="Kerlavage A.R."/>
            <person name="Dougherty B.A."/>
            <person name="Tomb J.-F."/>
            <person name="Adams M.D."/>
            <person name="Reich C.I."/>
            <person name="Overbeek R."/>
            <person name="Kirkness E.F."/>
            <person name="Weinstock K.G."/>
            <person name="Merrick J.M."/>
            <person name="Glodek A."/>
            <person name="Scott J.L."/>
            <person name="Geoghagen N.S.M."/>
            <person name="Weidman J.F."/>
            <person name="Fuhrmann J.L."/>
            <person name="Nguyen D."/>
            <person name="Utterback T.R."/>
            <person name="Kelley J.M."/>
            <person name="Peterson J.D."/>
            <person name="Sadow P.W."/>
            <person name="Hanna M.C."/>
            <person name="Cotton M.D."/>
            <person name="Roberts K.M."/>
            <person name="Hurst M.A."/>
            <person name="Kaine B.P."/>
            <person name="Borodovsky M."/>
            <person name="Klenk H.-P."/>
            <person name="Fraser C.M."/>
            <person name="Smith H.O."/>
            <person name="Woese C.R."/>
            <person name="Venter J.C."/>
        </authorList>
    </citation>
    <scope>NUCLEOTIDE SEQUENCE [LARGE SCALE GENOMIC DNA]</scope>
    <source>
        <strain>ATCC 43067 / DSM 2661 / JAL-1 / JCM 10045 / NBRC 100440</strain>
    </source>
</reference>
<gene>
    <name type="ordered locus">MJ1032</name>
</gene>
<keyword id="KW-1003">Cell membrane</keyword>
<keyword id="KW-0472">Membrane</keyword>
<keyword id="KW-1185">Reference proteome</keyword>
<keyword id="KW-0812">Transmembrane</keyword>
<keyword id="KW-1133">Transmembrane helix</keyword>
<accession>Q58438</accession>
<comment type="subcellular location">
    <subcellularLocation>
        <location evidence="2">Cell membrane</location>
        <topology evidence="2">Multi-pass membrane protein</topology>
    </subcellularLocation>
</comment>
<comment type="similarity">
    <text evidence="2">To A.fulgidus AF2058.</text>
</comment>